<reference key="1">
    <citation type="journal article" date="2009" name="Genome Res.">
        <title>Whole genome sequence of Desulfovibrio magneticus strain RS-1 revealed common gene clusters in magnetotactic bacteria.</title>
        <authorList>
            <person name="Nakazawa H."/>
            <person name="Arakaki A."/>
            <person name="Narita-Yamada S."/>
            <person name="Yashiro I."/>
            <person name="Jinno K."/>
            <person name="Aoki N."/>
            <person name="Tsuruyama A."/>
            <person name="Okamura Y."/>
            <person name="Tanikawa S."/>
            <person name="Fujita N."/>
            <person name="Takeyama H."/>
            <person name="Matsunaga T."/>
        </authorList>
    </citation>
    <scope>NUCLEOTIDE SEQUENCE [LARGE SCALE GENOMIC DNA]</scope>
    <source>
        <strain>ATCC 700980 / DSM 13731 / RS-1</strain>
    </source>
</reference>
<comment type="similarity">
    <text evidence="1">Belongs to the bacterial ribosomal protein bS21 family.</text>
</comment>
<sequence length="66" mass="7907">MPGVYLEESDNFDVALRRFKKQVEKSGILSELKKRQHFEKPSVMRKKKKAAARKRLLKKMRKINMM</sequence>
<dbReference type="EMBL" id="AP010904">
    <property type="protein sequence ID" value="BAH75557.1"/>
    <property type="molecule type" value="Genomic_DNA"/>
</dbReference>
<dbReference type="RefSeq" id="WP_006918961.1">
    <property type="nucleotide sequence ID" value="NC_012796.1"/>
</dbReference>
<dbReference type="SMR" id="C4XS35"/>
<dbReference type="STRING" id="573370.DMR_20660"/>
<dbReference type="KEGG" id="dma:DMR_20660"/>
<dbReference type="eggNOG" id="COG0828">
    <property type="taxonomic scope" value="Bacteria"/>
</dbReference>
<dbReference type="HOGENOM" id="CLU_159258_1_2_7"/>
<dbReference type="OrthoDB" id="9799244at2"/>
<dbReference type="Proteomes" id="UP000009071">
    <property type="component" value="Chromosome"/>
</dbReference>
<dbReference type="GO" id="GO:1990904">
    <property type="term" value="C:ribonucleoprotein complex"/>
    <property type="evidence" value="ECO:0007669"/>
    <property type="project" value="UniProtKB-KW"/>
</dbReference>
<dbReference type="GO" id="GO:0005840">
    <property type="term" value="C:ribosome"/>
    <property type="evidence" value="ECO:0007669"/>
    <property type="project" value="UniProtKB-KW"/>
</dbReference>
<dbReference type="GO" id="GO:0003735">
    <property type="term" value="F:structural constituent of ribosome"/>
    <property type="evidence" value="ECO:0007669"/>
    <property type="project" value="InterPro"/>
</dbReference>
<dbReference type="GO" id="GO:0006412">
    <property type="term" value="P:translation"/>
    <property type="evidence" value="ECO:0007669"/>
    <property type="project" value="UniProtKB-UniRule"/>
</dbReference>
<dbReference type="Gene3D" id="1.20.5.1150">
    <property type="entry name" value="Ribosomal protein S8"/>
    <property type="match status" value="1"/>
</dbReference>
<dbReference type="HAMAP" id="MF_00358">
    <property type="entry name" value="Ribosomal_bS21"/>
    <property type="match status" value="1"/>
</dbReference>
<dbReference type="InterPro" id="IPR001911">
    <property type="entry name" value="Ribosomal_bS21"/>
</dbReference>
<dbReference type="InterPro" id="IPR018278">
    <property type="entry name" value="Ribosomal_bS21_CS"/>
</dbReference>
<dbReference type="InterPro" id="IPR038380">
    <property type="entry name" value="Ribosomal_bS21_sf"/>
</dbReference>
<dbReference type="NCBIfam" id="TIGR00030">
    <property type="entry name" value="S21p"/>
    <property type="match status" value="1"/>
</dbReference>
<dbReference type="PANTHER" id="PTHR21109">
    <property type="entry name" value="MITOCHONDRIAL 28S RIBOSOMAL PROTEIN S21"/>
    <property type="match status" value="1"/>
</dbReference>
<dbReference type="PANTHER" id="PTHR21109:SF22">
    <property type="entry name" value="SMALL RIBOSOMAL SUBUNIT PROTEIN BS21"/>
    <property type="match status" value="1"/>
</dbReference>
<dbReference type="Pfam" id="PF01165">
    <property type="entry name" value="Ribosomal_S21"/>
    <property type="match status" value="1"/>
</dbReference>
<dbReference type="PRINTS" id="PR00976">
    <property type="entry name" value="RIBOSOMALS21"/>
</dbReference>
<dbReference type="PROSITE" id="PS01181">
    <property type="entry name" value="RIBOSOMAL_S21"/>
    <property type="match status" value="1"/>
</dbReference>
<evidence type="ECO:0000255" key="1">
    <source>
        <dbReference type="HAMAP-Rule" id="MF_00358"/>
    </source>
</evidence>
<evidence type="ECO:0000305" key="2"/>
<name>RS21_SOLM1</name>
<gene>
    <name evidence="1" type="primary">rpsU</name>
    <name type="ordered locus">DMR_20660</name>
</gene>
<accession>C4XS35</accession>
<feature type="chain" id="PRO_1000205364" description="Small ribosomal subunit protein bS21">
    <location>
        <begin position="1"/>
        <end position="66"/>
    </location>
</feature>
<organism>
    <name type="scientific">Solidesulfovibrio magneticus (strain ATCC 700980 / DSM 13731 / RS-1)</name>
    <name type="common">Desulfovibrio magneticus</name>
    <dbReference type="NCBI Taxonomy" id="573370"/>
    <lineage>
        <taxon>Bacteria</taxon>
        <taxon>Pseudomonadati</taxon>
        <taxon>Thermodesulfobacteriota</taxon>
        <taxon>Desulfovibrionia</taxon>
        <taxon>Desulfovibrionales</taxon>
        <taxon>Desulfovibrionaceae</taxon>
        <taxon>Solidesulfovibrio</taxon>
    </lineage>
</organism>
<proteinExistence type="inferred from homology"/>
<protein>
    <recommendedName>
        <fullName evidence="1">Small ribosomal subunit protein bS21</fullName>
    </recommendedName>
    <alternativeName>
        <fullName evidence="2">30S ribosomal protein S21</fullName>
    </alternativeName>
</protein>
<keyword id="KW-0687">Ribonucleoprotein</keyword>
<keyword id="KW-0689">Ribosomal protein</keyword>